<organism>
    <name type="scientific">Shewanella frigidimarina (strain NCIMB 400)</name>
    <dbReference type="NCBI Taxonomy" id="318167"/>
    <lineage>
        <taxon>Bacteria</taxon>
        <taxon>Pseudomonadati</taxon>
        <taxon>Pseudomonadota</taxon>
        <taxon>Gammaproteobacteria</taxon>
        <taxon>Alteromonadales</taxon>
        <taxon>Shewanellaceae</taxon>
        <taxon>Shewanella</taxon>
    </lineage>
</organism>
<comment type="function">
    <text evidence="1">Produces ATP from ADP in the presence of a proton gradient across the membrane. The alpha chain is a regulatory subunit.</text>
</comment>
<comment type="catalytic activity">
    <reaction evidence="1">
        <text>ATP + H2O + 4 H(+)(in) = ADP + phosphate + 5 H(+)(out)</text>
        <dbReference type="Rhea" id="RHEA:57720"/>
        <dbReference type="ChEBI" id="CHEBI:15377"/>
        <dbReference type="ChEBI" id="CHEBI:15378"/>
        <dbReference type="ChEBI" id="CHEBI:30616"/>
        <dbReference type="ChEBI" id="CHEBI:43474"/>
        <dbReference type="ChEBI" id="CHEBI:456216"/>
        <dbReference type="EC" id="7.1.2.2"/>
    </reaction>
</comment>
<comment type="subunit">
    <text evidence="1">F-type ATPases have 2 components, CF(1) - the catalytic core - and CF(0) - the membrane proton channel. CF(1) has five subunits: alpha(3), beta(3), gamma(1), delta(1), epsilon(1). CF(0) has three main subunits: a(1), b(2) and c(9-12). The alpha and beta chains form an alternating ring which encloses part of the gamma chain. CF(1) is attached to CF(0) by a central stalk formed by the gamma and epsilon chains, while a peripheral stalk is formed by the delta and b chains.</text>
</comment>
<comment type="subcellular location">
    <subcellularLocation>
        <location evidence="1">Cell inner membrane</location>
        <topology evidence="1">Peripheral membrane protein</topology>
    </subcellularLocation>
</comment>
<comment type="similarity">
    <text evidence="1">Belongs to the ATPase alpha/beta chains family.</text>
</comment>
<sequence length="517" mass="56044">MKLAPDLLQATFEQTFSILQQARRSFSPQLQPREIGTITSIATGIAKVSGLPGVGFEEILKFPSDIFGIAFNVDEDEIGAVLLGDYWHLQAGDEVERCGHLVDVPVGEGLLGRIINPIGEPLDGKGRLIASARLPIERPSPAIMNRAPVSVPLQTGIKVIDALIPVGLGQRELILGDRQTGKTAIAVDTILNQRDKNVLCVYCAIGQRASGVAKVIATLHEQGALEYTVVVVTEGNDPPGLAYIAPYAATSIAEYFMQQGRNVLIVYDDLTHHARAYRELSLLLRRPPGREAFPGDIFYIHSRLLERATHLSPNLGGGSLTALPIIETEAQDISAYIPTNLISITDGQIYLSPSLFELGVLPAIDVGKSVSRVGGKAQRAAYRAVASNLKLAYAQFEELETFASFGARLDDSTLKTIDHGRRIRACLKQAESTPISMIEQIAVLLALTANLFDEVPLDVMSQAEHAVRAATADIPVEITARLASTEKLTDEDRDGILQPVRDALAPFMHSQKRKEIT</sequence>
<name>ATPA1_SHEFN</name>
<evidence type="ECO:0000255" key="1">
    <source>
        <dbReference type="HAMAP-Rule" id="MF_01346"/>
    </source>
</evidence>
<gene>
    <name evidence="1" type="primary">atpA1</name>
    <name type="ordered locus">Sfri_3056</name>
</gene>
<feature type="chain" id="PRO_0000339057" description="ATP synthase subunit alpha 1">
    <location>
        <begin position="1"/>
        <end position="517"/>
    </location>
</feature>
<feature type="binding site" evidence="1">
    <location>
        <begin position="176"/>
        <end position="183"/>
    </location>
    <ligand>
        <name>ATP</name>
        <dbReference type="ChEBI" id="CHEBI:30616"/>
    </ligand>
</feature>
<feature type="site" description="Required for activity" evidence="1">
    <location>
        <position position="369"/>
    </location>
</feature>
<accession>Q07YM0</accession>
<protein>
    <recommendedName>
        <fullName evidence="1">ATP synthase subunit alpha 1</fullName>
        <ecNumber evidence="1">7.1.2.2</ecNumber>
    </recommendedName>
    <alternativeName>
        <fullName evidence="1">ATP synthase F1 sector subunit alpha 1</fullName>
    </alternativeName>
    <alternativeName>
        <fullName evidence="1">F-ATPase subunit alpha 1</fullName>
    </alternativeName>
</protein>
<reference key="1">
    <citation type="submission" date="2006-08" db="EMBL/GenBank/DDBJ databases">
        <title>Complete sequence of Shewanella frigidimarina NCIMB 400.</title>
        <authorList>
            <consortium name="US DOE Joint Genome Institute"/>
            <person name="Copeland A."/>
            <person name="Lucas S."/>
            <person name="Lapidus A."/>
            <person name="Barry K."/>
            <person name="Detter J.C."/>
            <person name="Glavina del Rio T."/>
            <person name="Hammon N."/>
            <person name="Israni S."/>
            <person name="Dalin E."/>
            <person name="Tice H."/>
            <person name="Pitluck S."/>
            <person name="Fredrickson J.K."/>
            <person name="Kolker E."/>
            <person name="McCuel L.A."/>
            <person name="DiChristina T."/>
            <person name="Nealson K.H."/>
            <person name="Newman D."/>
            <person name="Tiedje J.M."/>
            <person name="Zhou J."/>
            <person name="Romine M.F."/>
            <person name="Culley D.E."/>
            <person name="Serres M."/>
            <person name="Chertkov O."/>
            <person name="Brettin T."/>
            <person name="Bruce D."/>
            <person name="Han C."/>
            <person name="Tapia R."/>
            <person name="Gilna P."/>
            <person name="Schmutz J."/>
            <person name="Larimer F."/>
            <person name="Land M."/>
            <person name="Hauser L."/>
            <person name="Kyrpides N."/>
            <person name="Mikhailova N."/>
            <person name="Richardson P."/>
        </authorList>
    </citation>
    <scope>NUCLEOTIDE SEQUENCE [LARGE SCALE GENOMIC DNA]</scope>
    <source>
        <strain>NCIMB 400</strain>
    </source>
</reference>
<dbReference type="EC" id="7.1.2.2" evidence="1"/>
<dbReference type="EMBL" id="CP000447">
    <property type="protein sequence ID" value="ABI72894.1"/>
    <property type="molecule type" value="Genomic_DNA"/>
</dbReference>
<dbReference type="RefSeq" id="WP_011638500.1">
    <property type="nucleotide sequence ID" value="NC_008345.1"/>
</dbReference>
<dbReference type="SMR" id="Q07YM0"/>
<dbReference type="STRING" id="318167.Sfri_3056"/>
<dbReference type="KEGG" id="sfr:Sfri_3056"/>
<dbReference type="eggNOG" id="COG0056">
    <property type="taxonomic scope" value="Bacteria"/>
</dbReference>
<dbReference type="HOGENOM" id="CLU_010091_2_1_6"/>
<dbReference type="OrthoDB" id="9803053at2"/>
<dbReference type="Proteomes" id="UP000000684">
    <property type="component" value="Chromosome"/>
</dbReference>
<dbReference type="GO" id="GO:0005886">
    <property type="term" value="C:plasma membrane"/>
    <property type="evidence" value="ECO:0007669"/>
    <property type="project" value="UniProtKB-SubCell"/>
</dbReference>
<dbReference type="GO" id="GO:0045259">
    <property type="term" value="C:proton-transporting ATP synthase complex"/>
    <property type="evidence" value="ECO:0007669"/>
    <property type="project" value="UniProtKB-KW"/>
</dbReference>
<dbReference type="GO" id="GO:0043531">
    <property type="term" value="F:ADP binding"/>
    <property type="evidence" value="ECO:0007669"/>
    <property type="project" value="TreeGrafter"/>
</dbReference>
<dbReference type="GO" id="GO:0005524">
    <property type="term" value="F:ATP binding"/>
    <property type="evidence" value="ECO:0007669"/>
    <property type="project" value="UniProtKB-UniRule"/>
</dbReference>
<dbReference type="GO" id="GO:0046933">
    <property type="term" value="F:proton-transporting ATP synthase activity, rotational mechanism"/>
    <property type="evidence" value="ECO:0007669"/>
    <property type="project" value="UniProtKB-UniRule"/>
</dbReference>
<dbReference type="CDD" id="cd18113">
    <property type="entry name" value="ATP-synt_F1_alpha_C"/>
    <property type="match status" value="1"/>
</dbReference>
<dbReference type="CDD" id="cd18116">
    <property type="entry name" value="ATP-synt_F1_alpha_N"/>
    <property type="match status" value="1"/>
</dbReference>
<dbReference type="CDD" id="cd01132">
    <property type="entry name" value="F1-ATPase_alpha_CD"/>
    <property type="match status" value="1"/>
</dbReference>
<dbReference type="FunFam" id="3.40.50.300:FF:000002">
    <property type="entry name" value="ATP synthase subunit alpha"/>
    <property type="match status" value="1"/>
</dbReference>
<dbReference type="Gene3D" id="2.40.30.20">
    <property type="match status" value="1"/>
</dbReference>
<dbReference type="Gene3D" id="1.20.150.20">
    <property type="entry name" value="ATP synthase alpha/beta chain, C-terminal domain"/>
    <property type="match status" value="1"/>
</dbReference>
<dbReference type="Gene3D" id="3.40.50.300">
    <property type="entry name" value="P-loop containing nucleotide triphosphate hydrolases"/>
    <property type="match status" value="1"/>
</dbReference>
<dbReference type="HAMAP" id="MF_01346">
    <property type="entry name" value="ATP_synth_alpha_bact"/>
    <property type="match status" value="1"/>
</dbReference>
<dbReference type="InterPro" id="IPR017710">
    <property type="entry name" value="Alt_ATP_synth_F1_asu"/>
</dbReference>
<dbReference type="InterPro" id="IPR023366">
    <property type="entry name" value="ATP_synth_asu-like_sf"/>
</dbReference>
<dbReference type="InterPro" id="IPR000793">
    <property type="entry name" value="ATP_synth_asu_C"/>
</dbReference>
<dbReference type="InterPro" id="IPR038376">
    <property type="entry name" value="ATP_synth_asu_C_sf"/>
</dbReference>
<dbReference type="InterPro" id="IPR033732">
    <property type="entry name" value="ATP_synth_F1_a_nt-bd_dom"/>
</dbReference>
<dbReference type="InterPro" id="IPR005294">
    <property type="entry name" value="ATP_synth_F1_asu"/>
</dbReference>
<dbReference type="InterPro" id="IPR020003">
    <property type="entry name" value="ATPase_a/bsu_AS"/>
</dbReference>
<dbReference type="InterPro" id="IPR004100">
    <property type="entry name" value="ATPase_F1/V1/A1_a/bsu_N"/>
</dbReference>
<dbReference type="InterPro" id="IPR036121">
    <property type="entry name" value="ATPase_F1/V1/A1_a/bsu_N_sf"/>
</dbReference>
<dbReference type="InterPro" id="IPR000194">
    <property type="entry name" value="ATPase_F1/V1/A1_a/bsu_nucl-bd"/>
</dbReference>
<dbReference type="InterPro" id="IPR027417">
    <property type="entry name" value="P-loop_NTPase"/>
</dbReference>
<dbReference type="NCBIfam" id="TIGR03324">
    <property type="entry name" value="alt_F1F0_F1_al"/>
    <property type="match status" value="1"/>
</dbReference>
<dbReference type="NCBIfam" id="TIGR00962">
    <property type="entry name" value="atpA"/>
    <property type="match status" value="1"/>
</dbReference>
<dbReference type="NCBIfam" id="NF009884">
    <property type="entry name" value="PRK13343.1"/>
    <property type="match status" value="1"/>
</dbReference>
<dbReference type="PANTHER" id="PTHR48082">
    <property type="entry name" value="ATP SYNTHASE SUBUNIT ALPHA, MITOCHONDRIAL"/>
    <property type="match status" value="1"/>
</dbReference>
<dbReference type="PANTHER" id="PTHR48082:SF2">
    <property type="entry name" value="ATP SYNTHASE SUBUNIT ALPHA, MITOCHONDRIAL"/>
    <property type="match status" value="1"/>
</dbReference>
<dbReference type="Pfam" id="PF00006">
    <property type="entry name" value="ATP-synt_ab"/>
    <property type="match status" value="1"/>
</dbReference>
<dbReference type="Pfam" id="PF00306">
    <property type="entry name" value="ATP-synt_ab_C"/>
    <property type="match status" value="1"/>
</dbReference>
<dbReference type="Pfam" id="PF02874">
    <property type="entry name" value="ATP-synt_ab_N"/>
    <property type="match status" value="1"/>
</dbReference>
<dbReference type="SUPFAM" id="SSF47917">
    <property type="entry name" value="C-terminal domain of alpha and beta subunits of F1 ATP synthase"/>
    <property type="match status" value="1"/>
</dbReference>
<dbReference type="SUPFAM" id="SSF50615">
    <property type="entry name" value="N-terminal domain of alpha and beta subunits of F1 ATP synthase"/>
    <property type="match status" value="1"/>
</dbReference>
<dbReference type="SUPFAM" id="SSF52540">
    <property type="entry name" value="P-loop containing nucleoside triphosphate hydrolases"/>
    <property type="match status" value="1"/>
</dbReference>
<dbReference type="PROSITE" id="PS00152">
    <property type="entry name" value="ATPASE_ALPHA_BETA"/>
    <property type="match status" value="1"/>
</dbReference>
<proteinExistence type="inferred from homology"/>
<keyword id="KW-0066">ATP synthesis</keyword>
<keyword id="KW-0067">ATP-binding</keyword>
<keyword id="KW-0997">Cell inner membrane</keyword>
<keyword id="KW-1003">Cell membrane</keyword>
<keyword id="KW-0139">CF(1)</keyword>
<keyword id="KW-0375">Hydrogen ion transport</keyword>
<keyword id="KW-0406">Ion transport</keyword>
<keyword id="KW-0472">Membrane</keyword>
<keyword id="KW-0547">Nucleotide-binding</keyword>
<keyword id="KW-1185">Reference proteome</keyword>
<keyword id="KW-1278">Translocase</keyword>
<keyword id="KW-0813">Transport</keyword>